<comment type="similarity">
    <text evidence="1">Belongs to the bacterial ribosomal protein bL36 family.</text>
</comment>
<organism>
    <name type="scientific">Synechococcus sp. (strain JA-2-3B'a(2-13))</name>
    <name type="common">Cyanobacteria bacterium Yellowstone B-Prime</name>
    <dbReference type="NCBI Taxonomy" id="321332"/>
    <lineage>
        <taxon>Bacteria</taxon>
        <taxon>Bacillati</taxon>
        <taxon>Cyanobacteriota</taxon>
        <taxon>Cyanophyceae</taxon>
        <taxon>Synechococcales</taxon>
        <taxon>Synechococcaceae</taxon>
        <taxon>Synechococcus</taxon>
    </lineage>
</organism>
<feature type="chain" id="PRO_0000302320" description="Large ribosomal subunit protein bL36">
    <location>
        <begin position="1"/>
        <end position="38"/>
    </location>
</feature>
<sequence>MKVRPSVRRICEKCRVIRRHGRVMVICSSNPKHKQRQG</sequence>
<reference key="1">
    <citation type="journal article" date="2007" name="ISME J.">
        <title>Population level functional diversity in a microbial community revealed by comparative genomic and metagenomic analyses.</title>
        <authorList>
            <person name="Bhaya D."/>
            <person name="Grossman A.R."/>
            <person name="Steunou A.-S."/>
            <person name="Khuri N."/>
            <person name="Cohan F.M."/>
            <person name="Hamamura N."/>
            <person name="Melendrez M.C."/>
            <person name="Bateson M.M."/>
            <person name="Ward D.M."/>
            <person name="Heidelberg J.F."/>
        </authorList>
    </citation>
    <scope>NUCLEOTIDE SEQUENCE [LARGE SCALE GENOMIC DNA]</scope>
    <source>
        <strain>JA-2-3B'a(2-13)</strain>
    </source>
</reference>
<gene>
    <name evidence="1" type="primary">rpmJ</name>
    <name type="ordered locus">CYB_1577</name>
</gene>
<dbReference type="EMBL" id="CP000240">
    <property type="protein sequence ID" value="ABD02541.1"/>
    <property type="molecule type" value="Genomic_DNA"/>
</dbReference>
<dbReference type="RefSeq" id="WP_011433187.1">
    <property type="nucleotide sequence ID" value="NC_007776.1"/>
</dbReference>
<dbReference type="SMR" id="Q2JL77"/>
<dbReference type="STRING" id="321332.CYB_1577"/>
<dbReference type="KEGG" id="cyb:CYB_1577"/>
<dbReference type="eggNOG" id="COG0257">
    <property type="taxonomic scope" value="Bacteria"/>
</dbReference>
<dbReference type="HOGENOM" id="CLU_135723_6_2_3"/>
<dbReference type="OrthoDB" id="9802520at2"/>
<dbReference type="Proteomes" id="UP000001938">
    <property type="component" value="Chromosome"/>
</dbReference>
<dbReference type="GO" id="GO:0005737">
    <property type="term" value="C:cytoplasm"/>
    <property type="evidence" value="ECO:0007669"/>
    <property type="project" value="UniProtKB-ARBA"/>
</dbReference>
<dbReference type="GO" id="GO:1990904">
    <property type="term" value="C:ribonucleoprotein complex"/>
    <property type="evidence" value="ECO:0007669"/>
    <property type="project" value="UniProtKB-KW"/>
</dbReference>
<dbReference type="GO" id="GO:0005840">
    <property type="term" value="C:ribosome"/>
    <property type="evidence" value="ECO:0007669"/>
    <property type="project" value="UniProtKB-KW"/>
</dbReference>
<dbReference type="GO" id="GO:0003735">
    <property type="term" value="F:structural constituent of ribosome"/>
    <property type="evidence" value="ECO:0007669"/>
    <property type="project" value="InterPro"/>
</dbReference>
<dbReference type="GO" id="GO:0006412">
    <property type="term" value="P:translation"/>
    <property type="evidence" value="ECO:0007669"/>
    <property type="project" value="UniProtKB-UniRule"/>
</dbReference>
<dbReference type="HAMAP" id="MF_00251">
    <property type="entry name" value="Ribosomal_bL36"/>
    <property type="match status" value="1"/>
</dbReference>
<dbReference type="InterPro" id="IPR000473">
    <property type="entry name" value="Ribosomal_bL36"/>
</dbReference>
<dbReference type="InterPro" id="IPR035977">
    <property type="entry name" value="Ribosomal_bL36_sp"/>
</dbReference>
<dbReference type="NCBIfam" id="TIGR01022">
    <property type="entry name" value="rpmJ_bact"/>
    <property type="match status" value="1"/>
</dbReference>
<dbReference type="PANTHER" id="PTHR42888">
    <property type="entry name" value="50S RIBOSOMAL PROTEIN L36, CHLOROPLASTIC"/>
    <property type="match status" value="1"/>
</dbReference>
<dbReference type="PANTHER" id="PTHR42888:SF1">
    <property type="entry name" value="LARGE RIBOSOMAL SUBUNIT PROTEIN BL36C"/>
    <property type="match status" value="1"/>
</dbReference>
<dbReference type="Pfam" id="PF00444">
    <property type="entry name" value="Ribosomal_L36"/>
    <property type="match status" value="1"/>
</dbReference>
<dbReference type="SUPFAM" id="SSF57840">
    <property type="entry name" value="Ribosomal protein L36"/>
    <property type="match status" value="1"/>
</dbReference>
<dbReference type="PROSITE" id="PS00828">
    <property type="entry name" value="RIBOSOMAL_L36"/>
    <property type="match status" value="1"/>
</dbReference>
<proteinExistence type="inferred from homology"/>
<accession>Q2JL77</accession>
<name>RL36_SYNJB</name>
<protein>
    <recommendedName>
        <fullName evidence="1">Large ribosomal subunit protein bL36</fullName>
    </recommendedName>
    <alternativeName>
        <fullName evidence="2">50S ribosomal protein L36</fullName>
    </alternativeName>
</protein>
<evidence type="ECO:0000255" key="1">
    <source>
        <dbReference type="HAMAP-Rule" id="MF_00251"/>
    </source>
</evidence>
<evidence type="ECO:0000305" key="2"/>
<keyword id="KW-1185">Reference proteome</keyword>
<keyword id="KW-0687">Ribonucleoprotein</keyword>
<keyword id="KW-0689">Ribosomal protein</keyword>